<proteinExistence type="inferred from homology"/>
<comment type="function">
    <text evidence="2">May be involved in the formation or repair of [Fe-S] clusters present in iron-sulfur proteins.</text>
</comment>
<comment type="cofactor">
    <cofactor evidence="1">
        <name>[2Fe-2S] cluster</name>
        <dbReference type="ChEBI" id="CHEBI:190135"/>
    </cofactor>
    <text evidence="1">Binds 1 [2Fe-2S] cluster per subunit.</text>
</comment>
<comment type="similarity">
    <text evidence="2">Belongs to the NifU family.</text>
</comment>
<organism>
    <name type="scientific">Leptolyngbya boryana</name>
    <name type="common">Plectonema boryanum</name>
    <dbReference type="NCBI Taxonomy" id="1184"/>
    <lineage>
        <taxon>Bacteria</taxon>
        <taxon>Bacillati</taxon>
        <taxon>Cyanobacteriota</taxon>
        <taxon>Cyanophyceae</taxon>
        <taxon>Leptolyngbyales</taxon>
        <taxon>Leptolyngbyaceae</taxon>
        <taxon>Leptolyngbya group</taxon>
        <taxon>Leptolyngbya</taxon>
    </lineage>
</organism>
<sequence length="205" mass="21825">ALNVSNQDIAAFLGGLPEAKMHCSVMGQEALEAAIFKYRGIEVEHHEEDEGALICSCFGISEPKIRRVVIENGLTTVEQVTSYVKAGGGCGSCLADIEDIITAVIDEKETTAARIAAEISEAQIRKPLTNVQKIALIQKVLDEEVRPVLIADGGDVELYDVDGDFVKVTLKGACGSCASSTATLKDAVEAKLRLRVLPTLVVQAV</sequence>
<feature type="chain" id="PRO_0000166175" description="Nitrogen fixation protein NifU">
    <location>
        <begin position="1" status="less than"/>
        <end position="205"/>
    </location>
</feature>
<feature type="binding site" evidence="1">
    <location>
        <position position="55"/>
    </location>
    <ligand>
        <name>[2Fe-2S] cluster</name>
        <dbReference type="ChEBI" id="CHEBI:190135"/>
    </ligand>
</feature>
<feature type="binding site" evidence="1">
    <location>
        <position position="57"/>
    </location>
    <ligand>
        <name>[2Fe-2S] cluster</name>
        <dbReference type="ChEBI" id="CHEBI:190135"/>
    </ligand>
</feature>
<feature type="binding site" evidence="1">
    <location>
        <position position="90"/>
    </location>
    <ligand>
        <name>[2Fe-2S] cluster</name>
        <dbReference type="ChEBI" id="CHEBI:190135"/>
    </ligand>
</feature>
<feature type="binding site" evidence="1">
    <location>
        <position position="93"/>
    </location>
    <ligand>
        <name>[2Fe-2S] cluster</name>
        <dbReference type="ChEBI" id="CHEBI:190135"/>
    </ligand>
</feature>
<feature type="non-terminal residue">
    <location>
        <position position="1"/>
    </location>
</feature>
<keyword id="KW-0001">2Fe-2S</keyword>
<keyword id="KW-0408">Iron</keyword>
<keyword id="KW-0411">Iron-sulfur</keyword>
<keyword id="KW-0479">Metal-binding</keyword>
<keyword id="KW-0535">Nitrogen fixation</keyword>
<evidence type="ECO:0000250" key="1">
    <source>
        <dbReference type="UniProtKB" id="P05340"/>
    </source>
</evidence>
<evidence type="ECO:0000305" key="2"/>
<gene>
    <name type="primary">nifU</name>
</gene>
<name>NIFU_LEPBY</name>
<protein>
    <recommendedName>
        <fullName>Nitrogen fixation protein NifU</fullName>
    </recommendedName>
</protein>
<reference key="1">
    <citation type="journal article" date="1991" name="Plant Cell Physiol.">
        <title>Cloning, nucleotide sequences and differential expression of the nifH and nifH-like (frxC) genes from the filamentous nitrogen-fixing cyanobacterium Plectonema boryanum.</title>
        <authorList>
            <person name="Fujita Y."/>
            <person name="Takahashi Y."/>
            <person name="Shonai F."/>
            <person name="Ogura Y."/>
            <person name="Matsubara H."/>
        </authorList>
    </citation>
    <scope>NUCLEOTIDE SEQUENCE [GENOMIC DNA]</scope>
    <source>
        <strain>ATCC 27894 / CCAP 1463/1 / IAM M-101 / PCC 6306 / UTEX 581</strain>
    </source>
</reference>
<accession>Q00241</accession>
<dbReference type="EMBL" id="D00666">
    <property type="protein sequence ID" value="BAA00567.1"/>
    <property type="molecule type" value="Genomic_DNA"/>
</dbReference>
<dbReference type="PIR" id="PQ0649">
    <property type="entry name" value="PQ0649"/>
</dbReference>
<dbReference type="GO" id="GO:0051537">
    <property type="term" value="F:2 iron, 2 sulfur cluster binding"/>
    <property type="evidence" value="ECO:0007669"/>
    <property type="project" value="UniProtKB-KW"/>
</dbReference>
<dbReference type="GO" id="GO:0005506">
    <property type="term" value="F:iron ion binding"/>
    <property type="evidence" value="ECO:0007669"/>
    <property type="project" value="InterPro"/>
</dbReference>
<dbReference type="GO" id="GO:0016226">
    <property type="term" value="P:iron-sulfur cluster assembly"/>
    <property type="evidence" value="ECO:0007669"/>
    <property type="project" value="InterPro"/>
</dbReference>
<dbReference type="GO" id="GO:0009399">
    <property type="term" value="P:nitrogen fixation"/>
    <property type="evidence" value="ECO:0007669"/>
    <property type="project" value="UniProtKB-KW"/>
</dbReference>
<dbReference type="CDD" id="cd19947">
    <property type="entry name" value="NifU_Fer2_BFD-like"/>
    <property type="match status" value="1"/>
</dbReference>
<dbReference type="Gene3D" id="3.90.1010.10">
    <property type="match status" value="1"/>
</dbReference>
<dbReference type="Gene3D" id="1.10.10.1100">
    <property type="entry name" value="BFD-like [2Fe-2S]-binding domain"/>
    <property type="match status" value="1"/>
</dbReference>
<dbReference type="Gene3D" id="3.30.300.130">
    <property type="entry name" value="Fe-S cluster assembly (FSCA)"/>
    <property type="match status" value="1"/>
</dbReference>
<dbReference type="InterPro" id="IPR007419">
    <property type="entry name" value="BFD-like_2Fe2S-bd_dom"/>
</dbReference>
<dbReference type="InterPro" id="IPR041854">
    <property type="entry name" value="BFD-like_2Fe2S-bd_dom_sf"/>
</dbReference>
<dbReference type="InterPro" id="IPR034904">
    <property type="entry name" value="FSCA_dom_sf"/>
</dbReference>
<dbReference type="InterPro" id="IPR001075">
    <property type="entry name" value="NIF_FeS_clus_asmbl_NifU_C"/>
</dbReference>
<dbReference type="InterPro" id="IPR002871">
    <property type="entry name" value="NIF_FeS_clus_asmbl_NifU_N"/>
</dbReference>
<dbReference type="PANTHER" id="PTHR11178">
    <property type="entry name" value="IRON-SULFUR CLUSTER SCAFFOLD PROTEIN NFU-RELATED"/>
    <property type="match status" value="1"/>
</dbReference>
<dbReference type="PANTHER" id="PTHR11178:SF25">
    <property type="entry name" value="NIFU-LIKE PROTEIN 3, CHLOROPLASTIC"/>
    <property type="match status" value="1"/>
</dbReference>
<dbReference type="Pfam" id="PF04324">
    <property type="entry name" value="Fer2_BFD"/>
    <property type="match status" value="1"/>
</dbReference>
<dbReference type="Pfam" id="PF01106">
    <property type="entry name" value="NifU"/>
    <property type="match status" value="1"/>
</dbReference>
<dbReference type="Pfam" id="PF01592">
    <property type="entry name" value="NifU_N"/>
    <property type="match status" value="1"/>
</dbReference>
<dbReference type="SUPFAM" id="SSF117916">
    <property type="entry name" value="Fe-S cluster assembly (FSCA) domain-like"/>
    <property type="match status" value="1"/>
</dbReference>
<dbReference type="SUPFAM" id="SSF82649">
    <property type="entry name" value="SufE/NifU"/>
    <property type="match status" value="1"/>
</dbReference>